<proteinExistence type="evidence at protein level"/>
<feature type="chain" id="PRO_0000218467" description="Diacylglycerol kinase theta">
    <location>
        <begin position="1"/>
        <end position="942"/>
    </location>
</feature>
<feature type="domain" description="Ras-associating" evidence="3">
    <location>
        <begin position="395"/>
        <end position="494"/>
    </location>
</feature>
<feature type="domain" description="DAGKc" evidence="5">
    <location>
        <begin position="584"/>
        <end position="721"/>
    </location>
</feature>
<feature type="zinc finger region" description="Phorbol-ester/DAG-type 1" evidence="4">
    <location>
        <begin position="60"/>
        <end position="108"/>
    </location>
</feature>
<feature type="zinc finger region" description="Phorbol-ester/DAG-type 2" evidence="4">
    <location>
        <begin position="121"/>
        <end position="168"/>
    </location>
</feature>
<feature type="zinc finger region" description="Phorbol-ester/DAG-type 3" evidence="4">
    <location>
        <begin position="183"/>
        <end position="234"/>
    </location>
</feature>
<feature type="region of interest" description="Disordered" evidence="6">
    <location>
        <begin position="1"/>
        <end position="59"/>
    </location>
</feature>
<feature type="region of interest" description="Disordered" evidence="6">
    <location>
        <begin position="269"/>
        <end position="295"/>
    </location>
</feature>
<feature type="region of interest" description="Disordered" evidence="6">
    <location>
        <begin position="908"/>
        <end position="942"/>
    </location>
</feature>
<feature type="short sequence motif" description="LXXLL motif 1" evidence="23">
    <location>
        <begin position="555"/>
        <end position="559"/>
    </location>
</feature>
<feature type="short sequence motif" description="LXXLL motif 2" evidence="23">
    <location>
        <begin position="574"/>
        <end position="578"/>
    </location>
</feature>
<feature type="compositionally biased region" description="Low complexity" evidence="6">
    <location>
        <begin position="45"/>
        <end position="59"/>
    </location>
</feature>
<feature type="compositionally biased region" description="Basic residues" evidence="6">
    <location>
        <begin position="911"/>
        <end position="924"/>
    </location>
</feature>
<feature type="compositionally biased region" description="Low complexity" evidence="6">
    <location>
        <begin position="932"/>
        <end position="942"/>
    </location>
</feature>
<feature type="modified residue" description="Phosphoserine" evidence="2">
    <location>
        <position position="22"/>
    </location>
</feature>
<feature type="modified residue" description="Phosphoserine" evidence="2">
    <location>
        <position position="26"/>
    </location>
</feature>
<feature type="sequence variant" id="VAR_058478" description="In dbSNP:rs17855876." evidence="11">
    <original>P</original>
    <variation>L</variation>
    <location>
        <position position="27"/>
    </location>
</feature>
<feature type="mutagenesis site" description="Abolishes translocation to the plasma membrane." evidence="12">
    <original>C</original>
    <variation>G</variation>
    <location>
        <position position="100"/>
    </location>
</feature>
<feature type="mutagenesis site" description="Abolishes translocation to the plasma membrane." evidence="12">
    <original>C</original>
    <variation>G</variation>
    <location>
        <position position="160"/>
    </location>
</feature>
<feature type="mutagenesis site" description="Abolishes translocation to the plasma membrane." evidence="12">
    <original>C</original>
    <variation>G</variation>
    <location>
        <position position="226"/>
    </location>
</feature>
<feature type="mutagenesis site" description="Loss of diacylglycerol kinase activity. No effect on translocation to the plasma membrane." evidence="10 12">
    <original>G</original>
    <variation>R</variation>
    <location>
        <position position="237"/>
    </location>
</feature>
<feature type="mutagenesis site" description="No effect on diacylglycerol kinase activity." evidence="10">
    <original>S</original>
    <variation>T</variation>
    <location>
        <position position="241"/>
    </location>
</feature>
<feature type="mutagenesis site" description="No effect on diacylglycerol kinase activity." evidence="10">
    <original>L</original>
    <variation>V</variation>
    <location>
        <position position="242"/>
    </location>
</feature>
<feature type="mutagenesis site" description="Decreased diacylglycerol kinase activity." evidence="10">
    <original>P</original>
    <variation>A</variation>
    <variation>L</variation>
    <location>
        <position position="245"/>
    </location>
</feature>
<feature type="mutagenesis site" description="Loss of diacylglycerol kinase activity." evidence="10">
    <original>P</original>
    <variation>L</variation>
    <location>
        <position position="246"/>
    </location>
</feature>
<feature type="mutagenesis site" description="Loss of diacylglycerol kinase activity. Loss of function is synaptic endocytosis." evidence="10 16">
    <original>G</original>
    <variation>A</variation>
    <location>
        <position position="648"/>
    </location>
</feature>
<feature type="sequence conflict" description="In Ref. 1; AAA98749." evidence="21" ref="1">
    <original>PE</original>
    <variation>RD</variation>
    <location>
        <begin position="45"/>
        <end position="46"/>
    </location>
</feature>
<feature type="sequence conflict" description="In Ref. 1; AAA98749." evidence="21" ref="1">
    <original>VRAPGPA</original>
    <variation>GVRARAR</variation>
    <location>
        <begin position="50"/>
        <end position="56"/>
    </location>
</feature>
<feature type="sequence conflict" description="In Ref. 1; AAA98749." evidence="21" ref="1">
    <original>A</original>
    <variation>R</variation>
    <location>
        <position position="933"/>
    </location>
</feature>
<comment type="function">
    <text evidence="1 8 13 14 16 17">Diacylglycerol kinase that converts diacylglycerol/DAG into phosphatidic acid/phosphatidate/PA and regulates the respective levels of these two bioactive lipids (PubMed:11309392, PubMed:22627129, PubMed:9099683). Thereby, acts as a central switch between the signaling pathways activated by these second messengers with different cellular targets and opposite effects in numerous biological processes (PubMed:11309392, PubMed:17664281, PubMed:26748701). Within the adrenocorticotropic hormone signaling pathway, produces phosphatidic acid which in turn activates NR5A1 and subsequent steroidogenic gene transcription (PubMed:17664281). Also functions downstream of the nerve growth factor signaling pathway being specifically activated in the nucleus by the growth factor (By similarity). Through its diacylglycerol activity also regulates synaptic vesicle endocytosis (PubMed:26748701).</text>
</comment>
<comment type="catalytic activity">
    <reaction evidence="7 8 10 14 15 17">
        <text>a 1,2-diacyl-sn-glycerol + ATP = a 1,2-diacyl-sn-glycero-3-phosphate + ADP + H(+)</text>
        <dbReference type="Rhea" id="RHEA:10272"/>
        <dbReference type="ChEBI" id="CHEBI:15378"/>
        <dbReference type="ChEBI" id="CHEBI:17815"/>
        <dbReference type="ChEBI" id="CHEBI:30616"/>
        <dbReference type="ChEBI" id="CHEBI:58608"/>
        <dbReference type="ChEBI" id="CHEBI:456216"/>
        <dbReference type="EC" id="2.7.1.107"/>
    </reaction>
    <physiologicalReaction direction="left-to-right" evidence="25">
        <dbReference type="Rhea" id="RHEA:10273"/>
    </physiologicalReaction>
</comment>
<comment type="catalytic activity">
    <reaction evidence="14">
        <text>a 1-O-alkyl-sn-glycerol + ATP = a 1-O-alkyl-sn-glycero-3-phosphate + ADP + H(+)</text>
        <dbReference type="Rhea" id="RHEA:16937"/>
        <dbReference type="ChEBI" id="CHEBI:15378"/>
        <dbReference type="ChEBI" id="CHEBI:15850"/>
        <dbReference type="ChEBI" id="CHEBI:30616"/>
        <dbReference type="ChEBI" id="CHEBI:58014"/>
        <dbReference type="ChEBI" id="CHEBI:456216"/>
        <dbReference type="EC" id="2.7.1.93"/>
    </reaction>
    <physiologicalReaction direction="left-to-right" evidence="24">
        <dbReference type="Rhea" id="RHEA:16938"/>
    </physiologicalReaction>
</comment>
<comment type="catalytic activity">
    <reaction evidence="14">
        <text>1-O-alkyl-2-acyl-sn-glycerol + ATP = 1-O-alkyl-2-acyl-sn-glycero-3-phosphate + ADP + H(+)</text>
        <dbReference type="Rhea" id="RHEA:44072"/>
        <dbReference type="ChEBI" id="CHEBI:15378"/>
        <dbReference type="ChEBI" id="CHEBI:30616"/>
        <dbReference type="ChEBI" id="CHEBI:52595"/>
        <dbReference type="ChEBI" id="CHEBI:73332"/>
        <dbReference type="ChEBI" id="CHEBI:456216"/>
    </reaction>
    <physiologicalReaction direction="left-to-right" evidence="24">
        <dbReference type="Rhea" id="RHEA:44073"/>
    </physiologicalReaction>
</comment>
<comment type="catalytic activity">
    <reaction evidence="8 10 14 15 17">
        <text>1,2-di-(9Z-octadecenoyl)-sn-glycerol + ATP = 1,2-di-(9Z-octadecenoyl)-sn-glycero-3-phosphate + ADP + H(+)</text>
        <dbReference type="Rhea" id="RHEA:40327"/>
        <dbReference type="ChEBI" id="CHEBI:15378"/>
        <dbReference type="ChEBI" id="CHEBI:30616"/>
        <dbReference type="ChEBI" id="CHEBI:52333"/>
        <dbReference type="ChEBI" id="CHEBI:74546"/>
        <dbReference type="ChEBI" id="CHEBI:456216"/>
    </reaction>
    <physiologicalReaction direction="left-to-right" evidence="25">
        <dbReference type="Rhea" id="RHEA:40328"/>
    </physiologicalReaction>
</comment>
<comment type="catalytic activity">
    <reaction evidence="14">
        <text>1-O-hexadecyl-sn-glycerol + ATP = 1-O-hexadecyl-sn-glycero-3-phosphate + ADP + H(+)</text>
        <dbReference type="Rhea" id="RHEA:41672"/>
        <dbReference type="ChEBI" id="CHEBI:15378"/>
        <dbReference type="ChEBI" id="CHEBI:30616"/>
        <dbReference type="ChEBI" id="CHEBI:34115"/>
        <dbReference type="ChEBI" id="CHEBI:77580"/>
        <dbReference type="ChEBI" id="CHEBI:456216"/>
    </reaction>
    <physiologicalReaction direction="left-to-right" evidence="24">
        <dbReference type="Rhea" id="RHEA:41673"/>
    </physiologicalReaction>
</comment>
<comment type="catalytic activity">
    <reaction evidence="14">
        <text>1-O-hexadecyl-2-acetyl-sn-glycerol + ATP = 1-O-hexadecyl-2-acetyl-sn-glycero-3-phosphate + ADP + H(+)</text>
        <dbReference type="Rhea" id="RHEA:41676"/>
        <dbReference type="ChEBI" id="CHEBI:15378"/>
        <dbReference type="ChEBI" id="CHEBI:30616"/>
        <dbReference type="ChEBI" id="CHEBI:75936"/>
        <dbReference type="ChEBI" id="CHEBI:78385"/>
        <dbReference type="ChEBI" id="CHEBI:456216"/>
    </reaction>
    <physiologicalReaction direction="left-to-right" evidence="24">
        <dbReference type="Rhea" id="RHEA:41677"/>
    </physiologicalReaction>
</comment>
<comment type="catalytic activity">
    <reaction evidence="17">
        <text>1-octadecanoyl-2-(5Z,8Z,11Z,14Z-eicosatetraenoyl)-sn-glycerol + ATP = 1-octadecanoyl-2-(5Z,8Z,11Z,14Z-eicosatetraenoyl)-sn-glycero-3-phosphate + ADP + H(+)</text>
        <dbReference type="Rhea" id="RHEA:40323"/>
        <dbReference type="ChEBI" id="CHEBI:15378"/>
        <dbReference type="ChEBI" id="CHEBI:30616"/>
        <dbReference type="ChEBI" id="CHEBI:75728"/>
        <dbReference type="ChEBI" id="CHEBI:77091"/>
        <dbReference type="ChEBI" id="CHEBI:456216"/>
    </reaction>
    <physiologicalReaction direction="left-to-right" evidence="25">
        <dbReference type="Rhea" id="RHEA:40324"/>
    </physiologicalReaction>
</comment>
<comment type="activity regulation">
    <text evidence="8">Activated by phosphatidylserine.</text>
</comment>
<comment type="pathway">
    <text evidence="25">Lipid metabolism; glycerolipid metabolism.</text>
</comment>
<comment type="subunit">
    <text evidence="8 9 10 12 13">Interacts with RHOA (constitutively activated, GTP-bound); the interaction inhibits DGKQ (PubMed:11309392, PubMed:15164764). Interacts with PRKCE (PubMed:15632189). Interacts with PRKCH (PubMed:15632189). Interacts with PLCB1 (PubMed:12799190). Interacts with NR5A1; the interaction requires both LXXLL motifs in DGKQ and is required for full phosphatidic acid-mediated activation of NR5A1 (PubMed:17664281).</text>
</comment>
<comment type="interaction">
    <interactant intactId="EBI-4401238">
        <id>P52824</id>
    </interactant>
    <interactant intactId="EBI-22310682">
        <id>P0DPK4</id>
        <label>NOTCH2NLC</label>
    </interactant>
    <organismsDiffer>false</organismsDiffer>
    <experiments>3</experiments>
</comment>
<comment type="subcellular location">
    <subcellularLocation>
        <location evidence="12">Cytoplasm</location>
    </subcellularLocation>
    <subcellularLocation>
        <location evidence="2">Cytoplasm</location>
        <location evidence="2">Cytosol</location>
    </subcellularLocation>
    <subcellularLocation>
        <location evidence="7 12">Cell membrane</location>
    </subcellularLocation>
    <subcellularLocation>
        <location evidence="2">Synapse</location>
    </subcellularLocation>
    <subcellularLocation>
        <location evidence="7">Cytoplasm</location>
        <location evidence="7">Cytoskeleton</location>
    </subcellularLocation>
    <subcellularLocation>
        <location evidence="9">Nucleus</location>
    </subcellularLocation>
    <subcellularLocation>
        <location evidence="9">Nucleus speckle</location>
    </subcellularLocation>
    <subcellularLocation>
        <location evidence="1">Nucleus matrix</location>
    </subcellularLocation>
    <text evidence="1 12 22">Translocates to the plasma membrane in response to steroid hormone receptor stimulation (PubMed:15632189). Translocation to the plasma membrane is dependent on G-protein coupled receptor stimulation and subsequent activation of PRKCE and probably PRKCH (PubMed:15632189). Translocates to the nucleus in response to thrombin stimulation (Probable). Association with the nuclear matrix is regulated by nerve growth factor (By similarity).</text>
</comment>
<comment type="domain">
    <text evidence="13">The L-X-X-L-L repeats are both required for binding and phosphatidic acid-mediated activation of the nuclear receptor NR5A1.</text>
</comment>
<comment type="PTM">
    <text evidence="12">Phosphorylated by PRKCE and PRKCH in vitro.</text>
</comment>
<comment type="similarity">
    <text evidence="21">Belongs to the eukaryotic diacylglycerol kinase family.</text>
</comment>
<evidence type="ECO:0000250" key="1">
    <source>
        <dbReference type="UniProtKB" id="D3ZEY4"/>
    </source>
</evidence>
<evidence type="ECO:0000250" key="2">
    <source>
        <dbReference type="UniProtKB" id="Q6P5E8"/>
    </source>
</evidence>
<evidence type="ECO:0000255" key="3">
    <source>
        <dbReference type="PROSITE-ProRule" id="PRU00166"/>
    </source>
</evidence>
<evidence type="ECO:0000255" key="4">
    <source>
        <dbReference type="PROSITE-ProRule" id="PRU00226"/>
    </source>
</evidence>
<evidence type="ECO:0000255" key="5">
    <source>
        <dbReference type="PROSITE-ProRule" id="PRU00783"/>
    </source>
</evidence>
<evidence type="ECO:0000256" key="6">
    <source>
        <dbReference type="SAM" id="MobiDB-lite"/>
    </source>
</evidence>
<evidence type="ECO:0000269" key="7">
    <source>
    </source>
</evidence>
<evidence type="ECO:0000269" key="8">
    <source>
    </source>
</evidence>
<evidence type="ECO:0000269" key="9">
    <source>
    </source>
</evidence>
<evidence type="ECO:0000269" key="10">
    <source>
    </source>
</evidence>
<evidence type="ECO:0000269" key="11">
    <source>
    </source>
</evidence>
<evidence type="ECO:0000269" key="12">
    <source>
    </source>
</evidence>
<evidence type="ECO:0000269" key="13">
    <source>
    </source>
</evidence>
<evidence type="ECO:0000269" key="14">
    <source>
    </source>
</evidence>
<evidence type="ECO:0000269" key="15">
    <source>
    </source>
</evidence>
<evidence type="ECO:0000269" key="16">
    <source>
    </source>
</evidence>
<evidence type="ECO:0000269" key="17">
    <source>
    </source>
</evidence>
<evidence type="ECO:0000303" key="18">
    <source>
    </source>
</evidence>
<evidence type="ECO:0000303" key="19">
    <source>
    </source>
</evidence>
<evidence type="ECO:0000303" key="20">
    <source>
    </source>
</evidence>
<evidence type="ECO:0000305" key="21"/>
<evidence type="ECO:0000305" key="22">
    <source>
    </source>
</evidence>
<evidence type="ECO:0000305" key="23">
    <source>
    </source>
</evidence>
<evidence type="ECO:0000305" key="24">
    <source>
    </source>
</evidence>
<evidence type="ECO:0000305" key="25">
    <source>
    </source>
</evidence>
<evidence type="ECO:0000312" key="26">
    <source>
        <dbReference type="HGNC" id="HGNC:2856"/>
    </source>
</evidence>
<keyword id="KW-0067">ATP-binding</keyword>
<keyword id="KW-1003">Cell membrane</keyword>
<keyword id="KW-0963">Cytoplasm</keyword>
<keyword id="KW-0206">Cytoskeleton</keyword>
<keyword id="KW-0418">Kinase</keyword>
<keyword id="KW-0443">Lipid metabolism</keyword>
<keyword id="KW-0472">Membrane</keyword>
<keyword id="KW-0479">Metal-binding</keyword>
<keyword id="KW-0547">Nucleotide-binding</keyword>
<keyword id="KW-0539">Nucleus</keyword>
<keyword id="KW-0597">Phosphoprotein</keyword>
<keyword id="KW-1267">Proteomics identification</keyword>
<keyword id="KW-1185">Reference proteome</keyword>
<keyword id="KW-0677">Repeat</keyword>
<keyword id="KW-0770">Synapse</keyword>
<keyword id="KW-0808">Transferase</keyword>
<keyword id="KW-0862">Zinc</keyword>
<keyword id="KW-0863">Zinc-finger</keyword>
<organism>
    <name type="scientific">Homo sapiens</name>
    <name type="common">Human</name>
    <dbReference type="NCBI Taxonomy" id="9606"/>
    <lineage>
        <taxon>Eukaryota</taxon>
        <taxon>Metazoa</taxon>
        <taxon>Chordata</taxon>
        <taxon>Craniata</taxon>
        <taxon>Vertebrata</taxon>
        <taxon>Euteleostomi</taxon>
        <taxon>Mammalia</taxon>
        <taxon>Eutheria</taxon>
        <taxon>Euarchontoglires</taxon>
        <taxon>Primates</taxon>
        <taxon>Haplorrhini</taxon>
        <taxon>Catarrhini</taxon>
        <taxon>Hominidae</taxon>
        <taxon>Homo</taxon>
    </lineage>
</organism>
<name>DGKQ_HUMAN</name>
<gene>
    <name evidence="26" type="primary">DGKQ</name>
    <name evidence="19" type="synonym">DAGK4</name>
</gene>
<dbReference type="EC" id="2.7.1.107" evidence="7 8 10 14 15 17"/>
<dbReference type="EC" id="2.7.1.93" evidence="14"/>
<dbReference type="EMBL" id="L38707">
    <property type="protein sequence ID" value="AAA98749.1"/>
    <property type="molecule type" value="mRNA"/>
</dbReference>
<dbReference type="EMBL" id="AC019103">
    <property type="status" value="NOT_ANNOTATED_CDS"/>
    <property type="molecule type" value="Genomic_DNA"/>
</dbReference>
<dbReference type="EMBL" id="BC063801">
    <property type="protein sequence ID" value="AAH63801.1"/>
    <property type="molecule type" value="mRNA"/>
</dbReference>
<dbReference type="CCDS" id="CCDS3342.1"/>
<dbReference type="RefSeq" id="NP_001338.2">
    <property type="nucleotide sequence ID" value="NM_001347.3"/>
</dbReference>
<dbReference type="SMR" id="P52824"/>
<dbReference type="BioGRID" id="107979">
    <property type="interactions" value="21"/>
</dbReference>
<dbReference type="FunCoup" id="P52824">
    <property type="interactions" value="1411"/>
</dbReference>
<dbReference type="IntAct" id="P52824">
    <property type="interactions" value="5"/>
</dbReference>
<dbReference type="STRING" id="9606.ENSP00000273814"/>
<dbReference type="DrugBank" id="DB14001">
    <property type="generic name" value="alpha-Tocopherol succinate"/>
</dbReference>
<dbReference type="SwissLipids" id="SLP:000000740"/>
<dbReference type="GlyGen" id="P52824">
    <property type="glycosylation" value="3 sites, 1 O-linked glycan (3 sites)"/>
</dbReference>
<dbReference type="iPTMnet" id="P52824"/>
<dbReference type="PhosphoSitePlus" id="P52824"/>
<dbReference type="BioMuta" id="DGKQ"/>
<dbReference type="DMDM" id="257051005"/>
<dbReference type="jPOST" id="P52824"/>
<dbReference type="MassIVE" id="P52824"/>
<dbReference type="PaxDb" id="9606-ENSP00000273814"/>
<dbReference type="PeptideAtlas" id="P52824"/>
<dbReference type="ProteomicsDB" id="56542"/>
<dbReference type="Antibodypedia" id="22185">
    <property type="antibodies" value="221 antibodies from 31 providers"/>
</dbReference>
<dbReference type="DNASU" id="1609"/>
<dbReference type="Ensembl" id="ENST00000273814.8">
    <property type="protein sequence ID" value="ENSP00000273814.3"/>
    <property type="gene ID" value="ENSG00000145214.14"/>
</dbReference>
<dbReference type="GeneID" id="1609"/>
<dbReference type="KEGG" id="hsa:1609"/>
<dbReference type="MANE-Select" id="ENST00000273814.8">
    <property type="protein sequence ID" value="ENSP00000273814.3"/>
    <property type="RefSeq nucleotide sequence ID" value="NM_001347.4"/>
    <property type="RefSeq protein sequence ID" value="NP_001338.2"/>
</dbReference>
<dbReference type="UCSC" id="uc003gbw.5">
    <property type="organism name" value="human"/>
</dbReference>
<dbReference type="AGR" id="HGNC:2856"/>
<dbReference type="CTD" id="1609"/>
<dbReference type="DisGeNET" id="1609"/>
<dbReference type="GeneCards" id="DGKQ"/>
<dbReference type="HGNC" id="HGNC:2856">
    <property type="gene designation" value="DGKQ"/>
</dbReference>
<dbReference type="HPA" id="ENSG00000145214">
    <property type="expression patterns" value="Low tissue specificity"/>
</dbReference>
<dbReference type="MIM" id="601207">
    <property type="type" value="gene"/>
</dbReference>
<dbReference type="neXtProt" id="NX_P52824"/>
<dbReference type="OpenTargets" id="ENSG00000145214"/>
<dbReference type="PharmGKB" id="PA27317"/>
<dbReference type="VEuPathDB" id="HostDB:ENSG00000145214"/>
<dbReference type="eggNOG" id="KOG1169">
    <property type="taxonomic scope" value="Eukaryota"/>
</dbReference>
<dbReference type="GeneTree" id="ENSGT00940000159492"/>
<dbReference type="InParanoid" id="P52824"/>
<dbReference type="OMA" id="TCKDLWK"/>
<dbReference type="OrthoDB" id="242257at2759"/>
<dbReference type="PAN-GO" id="P52824">
    <property type="GO annotations" value="4 GO annotations based on evolutionary models"/>
</dbReference>
<dbReference type="PhylomeDB" id="P52824"/>
<dbReference type="TreeFam" id="TF312817"/>
<dbReference type="BRENDA" id="2.7.1.107">
    <property type="organism ID" value="2681"/>
</dbReference>
<dbReference type="PathwayCommons" id="P52824"/>
<dbReference type="Reactome" id="R-HSA-114508">
    <property type="pathway name" value="Effects of PIP2 hydrolysis"/>
</dbReference>
<dbReference type="SignaLink" id="P52824"/>
<dbReference type="UniPathway" id="UPA00230"/>
<dbReference type="BioGRID-ORCS" id="1609">
    <property type="hits" value="15 hits in 1161 CRISPR screens"/>
</dbReference>
<dbReference type="CD-CODE" id="804901D1">
    <property type="entry name" value="Nuclear speckle"/>
</dbReference>
<dbReference type="GeneWiki" id="DGKQ"/>
<dbReference type="GenomeRNAi" id="1609"/>
<dbReference type="Pharos" id="P52824">
    <property type="development level" value="Tbio"/>
</dbReference>
<dbReference type="PRO" id="PR:P52824"/>
<dbReference type="Proteomes" id="UP000005640">
    <property type="component" value="Chromosome 4"/>
</dbReference>
<dbReference type="RNAct" id="P52824">
    <property type="molecule type" value="protein"/>
</dbReference>
<dbReference type="Bgee" id="ENSG00000145214">
    <property type="expression patterns" value="Expressed in ileal mucosa and 163 other cell types or tissues"/>
</dbReference>
<dbReference type="ExpressionAtlas" id="P52824">
    <property type="expression patterns" value="baseline and differential"/>
</dbReference>
<dbReference type="GO" id="GO:0005737">
    <property type="term" value="C:cytoplasm"/>
    <property type="evidence" value="ECO:0000314"/>
    <property type="project" value="UniProtKB"/>
</dbReference>
<dbReference type="GO" id="GO:0005856">
    <property type="term" value="C:cytoskeleton"/>
    <property type="evidence" value="ECO:0000314"/>
    <property type="project" value="UniProtKB"/>
</dbReference>
<dbReference type="GO" id="GO:0005829">
    <property type="term" value="C:cytosol"/>
    <property type="evidence" value="ECO:0000314"/>
    <property type="project" value="UniProtKB"/>
</dbReference>
<dbReference type="GO" id="GO:0005768">
    <property type="term" value="C:endosome"/>
    <property type="evidence" value="ECO:0000314"/>
    <property type="project" value="ParkinsonsUK-UCL"/>
</dbReference>
<dbReference type="GO" id="GO:0098978">
    <property type="term" value="C:glutamatergic synapse"/>
    <property type="evidence" value="ECO:0007669"/>
    <property type="project" value="Ensembl"/>
</dbReference>
<dbReference type="GO" id="GO:0016020">
    <property type="term" value="C:membrane"/>
    <property type="evidence" value="ECO:0000318"/>
    <property type="project" value="GO_Central"/>
</dbReference>
<dbReference type="GO" id="GO:0016363">
    <property type="term" value="C:nuclear matrix"/>
    <property type="evidence" value="ECO:0000250"/>
    <property type="project" value="ParkinsonsUK-UCL"/>
</dbReference>
<dbReference type="GO" id="GO:0016607">
    <property type="term" value="C:nuclear speck"/>
    <property type="evidence" value="ECO:0000314"/>
    <property type="project" value="UniProtKB"/>
</dbReference>
<dbReference type="GO" id="GO:0005730">
    <property type="term" value="C:nucleolus"/>
    <property type="evidence" value="ECO:0000314"/>
    <property type="project" value="HPA"/>
</dbReference>
<dbReference type="GO" id="GO:0005634">
    <property type="term" value="C:nucleus"/>
    <property type="evidence" value="ECO:0000314"/>
    <property type="project" value="UniProtKB"/>
</dbReference>
<dbReference type="GO" id="GO:0005886">
    <property type="term" value="C:plasma membrane"/>
    <property type="evidence" value="ECO:0000314"/>
    <property type="project" value="UniProtKB"/>
</dbReference>
<dbReference type="GO" id="GO:0098794">
    <property type="term" value="C:postsynapse"/>
    <property type="evidence" value="ECO:0007669"/>
    <property type="project" value="Ensembl"/>
</dbReference>
<dbReference type="GO" id="GO:0098793">
    <property type="term" value="C:presynapse"/>
    <property type="evidence" value="ECO:0007669"/>
    <property type="project" value="Ensembl"/>
</dbReference>
<dbReference type="GO" id="GO:0012506">
    <property type="term" value="C:vesicle membrane"/>
    <property type="evidence" value="ECO:0000314"/>
    <property type="project" value="ParkinsonsUK-UCL"/>
</dbReference>
<dbReference type="GO" id="GO:0047649">
    <property type="term" value="F:alkylglycerol kinase activity"/>
    <property type="evidence" value="ECO:0007669"/>
    <property type="project" value="RHEA"/>
</dbReference>
<dbReference type="GO" id="GO:0005524">
    <property type="term" value="F:ATP binding"/>
    <property type="evidence" value="ECO:0007669"/>
    <property type="project" value="UniProtKB-KW"/>
</dbReference>
<dbReference type="GO" id="GO:0004143">
    <property type="term" value="F:ATP-dependent diacylglycerol kinase activity"/>
    <property type="evidence" value="ECO:0000314"/>
    <property type="project" value="UniProtKB"/>
</dbReference>
<dbReference type="GO" id="GO:0004697">
    <property type="term" value="F:diacylglycerol-dependent serine/threonine kinase activity"/>
    <property type="evidence" value="ECO:0000314"/>
    <property type="project" value="ParkinsonsUK-UCL"/>
</dbReference>
<dbReference type="GO" id="GO:0140297">
    <property type="term" value="F:DNA-binding transcription factor binding"/>
    <property type="evidence" value="ECO:0000353"/>
    <property type="project" value="UniProtKB"/>
</dbReference>
<dbReference type="GO" id="GO:0019900">
    <property type="term" value="F:kinase binding"/>
    <property type="evidence" value="ECO:0000353"/>
    <property type="project" value="UniProtKB"/>
</dbReference>
<dbReference type="GO" id="GO:0043274">
    <property type="term" value="F:phospholipase binding"/>
    <property type="evidence" value="ECO:0000353"/>
    <property type="project" value="UniProtKB"/>
</dbReference>
<dbReference type="GO" id="GO:0030971">
    <property type="term" value="F:receptor tyrosine kinase binding"/>
    <property type="evidence" value="ECO:0000353"/>
    <property type="project" value="ParkinsonsUK-UCL"/>
</dbReference>
<dbReference type="GO" id="GO:0030297">
    <property type="term" value="F:transmembrane receptor protein tyrosine kinase activator activity"/>
    <property type="evidence" value="ECO:0000316"/>
    <property type="project" value="ParkinsonsUK-UCL"/>
</dbReference>
<dbReference type="GO" id="GO:0008270">
    <property type="term" value="F:zinc ion binding"/>
    <property type="evidence" value="ECO:0007669"/>
    <property type="project" value="UniProtKB-KW"/>
</dbReference>
<dbReference type="GO" id="GO:0007189">
    <property type="term" value="P:adenylate cyclase-activating G protein-coupled receptor signaling pathway"/>
    <property type="evidence" value="ECO:0000315"/>
    <property type="project" value="ParkinsonsUK-UCL"/>
</dbReference>
<dbReference type="GO" id="GO:1903413">
    <property type="term" value="P:cellular response to bile acid"/>
    <property type="evidence" value="ECO:0000315"/>
    <property type="project" value="ParkinsonsUK-UCL"/>
</dbReference>
<dbReference type="GO" id="GO:0046339">
    <property type="term" value="P:diacylglycerol metabolic process"/>
    <property type="evidence" value="ECO:0000314"/>
    <property type="project" value="UniProtKB"/>
</dbReference>
<dbReference type="GO" id="GO:0007173">
    <property type="term" value="P:epidermal growth factor receptor signaling pathway"/>
    <property type="evidence" value="ECO:0000316"/>
    <property type="project" value="ParkinsonsUK-UCL"/>
</dbReference>
<dbReference type="GO" id="GO:0007186">
    <property type="term" value="P:G protein-coupled receptor signaling pathway"/>
    <property type="evidence" value="ECO:0000314"/>
    <property type="project" value="ParkinsonsUK-UCL"/>
</dbReference>
<dbReference type="GO" id="GO:0046486">
    <property type="term" value="P:glycerolipid metabolic process"/>
    <property type="evidence" value="ECO:0000314"/>
    <property type="project" value="BHF-UCL"/>
</dbReference>
<dbReference type="GO" id="GO:0035556">
    <property type="term" value="P:intracellular signal transduction"/>
    <property type="evidence" value="ECO:0000318"/>
    <property type="project" value="GO_Central"/>
</dbReference>
<dbReference type="GO" id="GO:0046834">
    <property type="term" value="P:lipid phosphorylation"/>
    <property type="evidence" value="ECO:0000314"/>
    <property type="project" value="UniProtKB"/>
</dbReference>
<dbReference type="GO" id="GO:0010629">
    <property type="term" value="P:negative regulation of gene expression"/>
    <property type="evidence" value="ECO:0000315"/>
    <property type="project" value="ParkinsonsUK-UCL"/>
</dbReference>
<dbReference type="GO" id="GO:0006654">
    <property type="term" value="P:phosphatidic acid biosynthetic process"/>
    <property type="evidence" value="ECO:0000314"/>
    <property type="project" value="UniProtKB"/>
</dbReference>
<dbReference type="GO" id="GO:0007200">
    <property type="term" value="P:phospholipase C-activating G protein-coupled receptor signaling pathway"/>
    <property type="evidence" value="ECO:0000315"/>
    <property type="project" value="UniProtKB"/>
</dbReference>
<dbReference type="GO" id="GO:0030168">
    <property type="term" value="P:platelet activation"/>
    <property type="evidence" value="ECO:0000304"/>
    <property type="project" value="Reactome"/>
</dbReference>
<dbReference type="GO" id="GO:0010628">
    <property type="term" value="P:positive regulation of gene expression"/>
    <property type="evidence" value="ECO:0000315"/>
    <property type="project" value="ParkinsonsUK-UCL"/>
</dbReference>
<dbReference type="GO" id="GO:0090037">
    <property type="term" value="P:positive regulation of protein kinase C signaling"/>
    <property type="evidence" value="ECO:0000314"/>
    <property type="project" value="ParkinsonsUK-UCL"/>
</dbReference>
<dbReference type="GO" id="GO:0090181">
    <property type="term" value="P:regulation of cholesterol metabolic process"/>
    <property type="evidence" value="ECO:0000315"/>
    <property type="project" value="ParkinsonsUK-UCL"/>
</dbReference>
<dbReference type="GO" id="GO:2000064">
    <property type="term" value="P:regulation of cortisol biosynthetic process"/>
    <property type="evidence" value="ECO:0000315"/>
    <property type="project" value="ParkinsonsUK-UCL"/>
</dbReference>
<dbReference type="GO" id="GO:0006111">
    <property type="term" value="P:regulation of gluconeogenesis"/>
    <property type="evidence" value="ECO:0000315"/>
    <property type="project" value="ParkinsonsUK-UCL"/>
</dbReference>
<dbReference type="GO" id="GO:2000182">
    <property type="term" value="P:regulation of progesterone biosynthetic process"/>
    <property type="evidence" value="ECO:0000315"/>
    <property type="project" value="ParkinsonsUK-UCL"/>
</dbReference>
<dbReference type="GO" id="GO:1900242">
    <property type="term" value="P:regulation of synaptic vesicle endocytosis"/>
    <property type="evidence" value="ECO:0007669"/>
    <property type="project" value="Ensembl"/>
</dbReference>
<dbReference type="GO" id="GO:1903432">
    <property type="term" value="P:regulation of TORC1 signaling"/>
    <property type="evidence" value="ECO:0000315"/>
    <property type="project" value="ParkinsonsUK-UCL"/>
</dbReference>
<dbReference type="GO" id="GO:0006357">
    <property type="term" value="P:regulation of transcription by RNA polymerase II"/>
    <property type="evidence" value="ECO:0000314"/>
    <property type="project" value="UniProtKB"/>
</dbReference>
<dbReference type="GO" id="GO:0051591">
    <property type="term" value="P:response to cAMP"/>
    <property type="evidence" value="ECO:0000314"/>
    <property type="project" value="ParkinsonsUK-UCL"/>
</dbReference>
<dbReference type="GO" id="GO:0070493">
    <property type="term" value="P:thrombin-activated receptor signaling pathway"/>
    <property type="evidence" value="ECO:0000314"/>
    <property type="project" value="UniProtKB"/>
</dbReference>
<dbReference type="CDD" id="cd20803">
    <property type="entry name" value="C1_DGKtheta_typeV_rpt1"/>
    <property type="match status" value="1"/>
</dbReference>
<dbReference type="CDD" id="cd20804">
    <property type="entry name" value="C1_DGKtheta_typeV_rpt2"/>
    <property type="match status" value="1"/>
</dbReference>
<dbReference type="CDD" id="cd20854">
    <property type="entry name" value="C1_DGKtheta_typeV_rpt3"/>
    <property type="match status" value="1"/>
</dbReference>
<dbReference type="CDD" id="cd17111">
    <property type="entry name" value="RA1_DAGK-theta"/>
    <property type="match status" value="1"/>
</dbReference>
<dbReference type="CDD" id="cd01783">
    <property type="entry name" value="RA2_DAGK-theta"/>
    <property type="match status" value="1"/>
</dbReference>
<dbReference type="FunFam" id="2.60.200.40:FF:000004">
    <property type="entry name" value="Diacylglycerol kinase"/>
    <property type="match status" value="1"/>
</dbReference>
<dbReference type="FunFam" id="3.10.20.90:FF:000188">
    <property type="entry name" value="Diacylglycerol kinase"/>
    <property type="match status" value="1"/>
</dbReference>
<dbReference type="FunFam" id="3.30.60.20:FF:000002">
    <property type="entry name" value="Diacylglycerol kinase"/>
    <property type="match status" value="1"/>
</dbReference>
<dbReference type="FunFam" id="3.30.60.20:FF:000053">
    <property type="entry name" value="Diacylglycerol kinase"/>
    <property type="match status" value="1"/>
</dbReference>
<dbReference type="FunFam" id="3.40.50.10330:FF:000012">
    <property type="entry name" value="Diacylglycerol kinase"/>
    <property type="match status" value="1"/>
</dbReference>
<dbReference type="Gene3D" id="2.60.200.40">
    <property type="match status" value="1"/>
</dbReference>
<dbReference type="Gene3D" id="3.30.60.20">
    <property type="match status" value="2"/>
</dbReference>
<dbReference type="Gene3D" id="3.10.20.90">
    <property type="entry name" value="Phosphatidylinositol 3-kinase Catalytic Subunit, Chain A, domain 1"/>
    <property type="match status" value="1"/>
</dbReference>
<dbReference type="Gene3D" id="3.40.50.10330">
    <property type="entry name" value="Probable inorganic polyphosphate/atp-NAD kinase, domain 1"/>
    <property type="match status" value="1"/>
</dbReference>
<dbReference type="InterPro" id="IPR017438">
    <property type="entry name" value="ATP-NAD_kinase_N"/>
</dbReference>
<dbReference type="InterPro" id="IPR046349">
    <property type="entry name" value="C1-like_sf"/>
</dbReference>
<dbReference type="InterPro" id="IPR037607">
    <property type="entry name" value="DGK"/>
</dbReference>
<dbReference type="InterPro" id="IPR056392">
    <property type="entry name" value="DGKtheta_RBD"/>
</dbReference>
<dbReference type="InterPro" id="IPR000756">
    <property type="entry name" value="Diacylglycerol_kin_accessory"/>
</dbReference>
<dbReference type="InterPro" id="IPR001206">
    <property type="entry name" value="Diacylglycerol_kinase_cat_dom"/>
</dbReference>
<dbReference type="InterPro" id="IPR016064">
    <property type="entry name" value="NAD/diacylglycerol_kinase_sf"/>
</dbReference>
<dbReference type="InterPro" id="IPR002219">
    <property type="entry name" value="PE/DAG-bd"/>
</dbReference>
<dbReference type="InterPro" id="IPR000159">
    <property type="entry name" value="RA_dom"/>
</dbReference>
<dbReference type="InterPro" id="IPR029071">
    <property type="entry name" value="Ubiquitin-like_domsf"/>
</dbReference>
<dbReference type="PANTHER" id="PTHR11255">
    <property type="entry name" value="DIACYLGLYCEROL KINASE"/>
    <property type="match status" value="1"/>
</dbReference>
<dbReference type="PANTHER" id="PTHR11255:SF54">
    <property type="entry name" value="DIACYLGLYCEROL KINASE THETA"/>
    <property type="match status" value="1"/>
</dbReference>
<dbReference type="Pfam" id="PF00130">
    <property type="entry name" value="C1_1"/>
    <property type="match status" value="2"/>
</dbReference>
<dbReference type="Pfam" id="PF00609">
    <property type="entry name" value="DAGK_acc"/>
    <property type="match status" value="1"/>
</dbReference>
<dbReference type="Pfam" id="PF00781">
    <property type="entry name" value="DAGK_cat"/>
    <property type="match status" value="1"/>
</dbReference>
<dbReference type="Pfam" id="PF00788">
    <property type="entry name" value="RA"/>
    <property type="match status" value="2"/>
</dbReference>
<dbReference type="Pfam" id="PF24099">
    <property type="entry name" value="RBD_DGKtheta"/>
    <property type="match status" value="1"/>
</dbReference>
<dbReference type="SMART" id="SM00109">
    <property type="entry name" value="C1"/>
    <property type="match status" value="3"/>
</dbReference>
<dbReference type="SMART" id="SM00045">
    <property type="entry name" value="DAGKa"/>
    <property type="match status" value="1"/>
</dbReference>
<dbReference type="SMART" id="SM00046">
    <property type="entry name" value="DAGKc"/>
    <property type="match status" value="1"/>
</dbReference>
<dbReference type="SMART" id="SM00314">
    <property type="entry name" value="RA"/>
    <property type="match status" value="1"/>
</dbReference>
<dbReference type="SUPFAM" id="SSF57889">
    <property type="entry name" value="Cysteine-rich domain"/>
    <property type="match status" value="3"/>
</dbReference>
<dbReference type="SUPFAM" id="SSF111331">
    <property type="entry name" value="NAD kinase/diacylglycerol kinase-like"/>
    <property type="match status" value="1"/>
</dbReference>
<dbReference type="SUPFAM" id="SSF54236">
    <property type="entry name" value="Ubiquitin-like"/>
    <property type="match status" value="1"/>
</dbReference>
<dbReference type="PROSITE" id="PS50146">
    <property type="entry name" value="DAGK"/>
    <property type="match status" value="1"/>
</dbReference>
<dbReference type="PROSITE" id="PS50200">
    <property type="entry name" value="RA"/>
    <property type="match status" value="1"/>
</dbReference>
<dbReference type="PROSITE" id="PS00479">
    <property type="entry name" value="ZF_DAG_PE_1"/>
    <property type="match status" value="3"/>
</dbReference>
<dbReference type="PROSITE" id="PS50081">
    <property type="entry name" value="ZF_DAG_PE_2"/>
    <property type="match status" value="3"/>
</dbReference>
<protein>
    <recommendedName>
        <fullName evidence="21">Diacylglycerol kinase theta</fullName>
        <shortName>DAG kinase theta</shortName>
        <shortName evidence="20">DGKtheta</shortName>
        <ecNumber evidence="7 8 10 14 15 17">2.7.1.107</ecNumber>
        <ecNumber evidence="14">2.7.1.93</ecNumber>
    </recommendedName>
    <alternativeName>
        <fullName>Diglyceride kinase theta</fullName>
        <shortName evidence="18">DGK-theta</shortName>
    </alternativeName>
</protein>
<reference key="1">
    <citation type="journal article" date="1995" name="Genomics">
        <title>Chromosomal localization of three mouse diacylglycerol kinase (DAGK) genes: genes sharing sequence homology to the Drosophila retinal degeneration A (rdgA) gene.</title>
        <authorList>
            <person name="Pilz A."/>
            <person name="Schaap D."/>
            <person name="Hunt D."/>
            <person name="Fitzgibbon J."/>
        </authorList>
    </citation>
    <scope>NUCLEOTIDE SEQUENCE [MRNA]</scope>
</reference>
<reference key="2">
    <citation type="journal article" date="2005" name="Nature">
        <title>Generation and annotation of the DNA sequences of human chromosomes 2 and 4.</title>
        <authorList>
            <person name="Hillier L.W."/>
            <person name="Graves T.A."/>
            <person name="Fulton R.S."/>
            <person name="Fulton L.A."/>
            <person name="Pepin K.H."/>
            <person name="Minx P."/>
            <person name="Wagner-McPherson C."/>
            <person name="Layman D."/>
            <person name="Wylie K."/>
            <person name="Sekhon M."/>
            <person name="Becker M.C."/>
            <person name="Fewell G.A."/>
            <person name="Delehaunty K.D."/>
            <person name="Miner T.L."/>
            <person name="Nash W.E."/>
            <person name="Kremitzki C."/>
            <person name="Oddy L."/>
            <person name="Du H."/>
            <person name="Sun H."/>
            <person name="Bradshaw-Cordum H."/>
            <person name="Ali J."/>
            <person name="Carter J."/>
            <person name="Cordes M."/>
            <person name="Harris A."/>
            <person name="Isak A."/>
            <person name="van Brunt A."/>
            <person name="Nguyen C."/>
            <person name="Du F."/>
            <person name="Courtney L."/>
            <person name="Kalicki J."/>
            <person name="Ozersky P."/>
            <person name="Abbott S."/>
            <person name="Armstrong J."/>
            <person name="Belter E.A."/>
            <person name="Caruso L."/>
            <person name="Cedroni M."/>
            <person name="Cotton M."/>
            <person name="Davidson T."/>
            <person name="Desai A."/>
            <person name="Elliott G."/>
            <person name="Erb T."/>
            <person name="Fronick C."/>
            <person name="Gaige T."/>
            <person name="Haakenson W."/>
            <person name="Haglund K."/>
            <person name="Holmes A."/>
            <person name="Harkins R."/>
            <person name="Kim K."/>
            <person name="Kruchowski S.S."/>
            <person name="Strong C.M."/>
            <person name="Grewal N."/>
            <person name="Goyea E."/>
            <person name="Hou S."/>
            <person name="Levy A."/>
            <person name="Martinka S."/>
            <person name="Mead K."/>
            <person name="McLellan M.D."/>
            <person name="Meyer R."/>
            <person name="Randall-Maher J."/>
            <person name="Tomlinson C."/>
            <person name="Dauphin-Kohlberg S."/>
            <person name="Kozlowicz-Reilly A."/>
            <person name="Shah N."/>
            <person name="Swearengen-Shahid S."/>
            <person name="Snider J."/>
            <person name="Strong J.T."/>
            <person name="Thompson J."/>
            <person name="Yoakum M."/>
            <person name="Leonard S."/>
            <person name="Pearman C."/>
            <person name="Trani L."/>
            <person name="Radionenko M."/>
            <person name="Waligorski J.E."/>
            <person name="Wang C."/>
            <person name="Rock S.M."/>
            <person name="Tin-Wollam A.-M."/>
            <person name="Maupin R."/>
            <person name="Latreille P."/>
            <person name="Wendl M.C."/>
            <person name="Yang S.-P."/>
            <person name="Pohl C."/>
            <person name="Wallis J.W."/>
            <person name="Spieth J."/>
            <person name="Bieri T.A."/>
            <person name="Berkowicz N."/>
            <person name="Nelson J.O."/>
            <person name="Osborne J."/>
            <person name="Ding L."/>
            <person name="Meyer R."/>
            <person name="Sabo A."/>
            <person name="Shotland Y."/>
            <person name="Sinha P."/>
            <person name="Wohldmann P.E."/>
            <person name="Cook L.L."/>
            <person name="Hickenbotham M.T."/>
            <person name="Eldred J."/>
            <person name="Williams D."/>
            <person name="Jones T.A."/>
            <person name="She X."/>
            <person name="Ciccarelli F.D."/>
            <person name="Izaurralde E."/>
            <person name="Taylor J."/>
            <person name="Schmutz J."/>
            <person name="Myers R.M."/>
            <person name="Cox D.R."/>
            <person name="Huang X."/>
            <person name="McPherson J.D."/>
            <person name="Mardis E.R."/>
            <person name="Clifton S.W."/>
            <person name="Warren W.C."/>
            <person name="Chinwalla A.T."/>
            <person name="Eddy S.R."/>
            <person name="Marra M.A."/>
            <person name="Ovcharenko I."/>
            <person name="Furey T.S."/>
            <person name="Miller W."/>
            <person name="Eichler E.E."/>
            <person name="Bork P."/>
            <person name="Suyama M."/>
            <person name="Torrents D."/>
            <person name="Waterston R.H."/>
            <person name="Wilson R.K."/>
        </authorList>
    </citation>
    <scope>NUCLEOTIDE SEQUENCE [LARGE SCALE GENOMIC DNA]</scope>
</reference>
<reference key="3">
    <citation type="journal article" date="2004" name="Genome Res.">
        <title>The status, quality, and expansion of the NIH full-length cDNA project: the Mammalian Gene Collection (MGC).</title>
        <authorList>
            <consortium name="The MGC Project Team"/>
        </authorList>
    </citation>
    <scope>NUCLEOTIDE SEQUENCE [LARGE SCALE MRNA]</scope>
    <scope>VARIANT LEU-27</scope>
    <source>
        <tissue>Uterus</tissue>
    </source>
</reference>
<reference key="4">
    <citation type="journal article" date="1997" name="J. Biol. Chem.">
        <title>Cloning of a novel human diacylglycerol kinase (DGKtheta) containing three cysteine-rich domains, a proline-rich region, and a pleckstrin homology domain with an overlapping Ras-associating domain.</title>
        <authorList>
            <person name="Houssa B."/>
            <person name="Schaap D."/>
            <person name="van der Wal J."/>
            <person name="Goto K."/>
            <person name="Kondo H."/>
            <person name="Yamakawa A."/>
            <person name="Shibata M."/>
            <person name="Takenawa T."/>
            <person name="van Blitterswijk W.J."/>
        </authorList>
    </citation>
    <scope>FUNCTION</scope>
    <scope>CATALYTIC ACTIVITY</scope>
    <scope>PATHWAY</scope>
</reference>
<reference key="5">
    <citation type="journal article" date="1999" name="J. Biol. Chem.">
        <title>Diacylglycerol kinase theta binds to and is negatively regulated by active RhoA.</title>
        <authorList>
            <person name="Houssa B."/>
            <person name="de Widt J."/>
            <person name="Kranenburg O."/>
            <person name="Moolenaar W.H."/>
            <person name="van Blitterswijk W.J."/>
        </authorList>
    </citation>
    <scope>CATALYTIC ACTIVITY</scope>
    <scope>INTERACTION WITH RHOA</scope>
    <scope>SUBCELLULAR LOCATION</scope>
</reference>
<reference key="6">
    <citation type="journal article" date="2001" name="J. Biol. Chem.">
        <title>Nuclear diacylglycerol kinase-theta is activated in response to alpha-thrombin.</title>
        <authorList>
            <person name="Bregoli L."/>
            <person name="Baldassare J.J."/>
            <person name="Raben D.M."/>
        </authorList>
    </citation>
    <scope>FUNCTION</scope>
    <scope>CATALYTIC ACTIVITY</scope>
    <scope>ACTIVITY REGULATION</scope>
    <scope>INTERACTION WITH RHOA</scope>
    <scope>SUBCELLULAR LOCATION</scope>
</reference>
<reference key="7">
    <citation type="journal article" date="2003" name="Exp. Cell Res.">
        <title>Diacylglycerol kinase-theta is localized in the speckle domains of the nucleus.</title>
        <authorList>
            <person name="Tabellini G."/>
            <person name="Bortul R."/>
            <person name="Santi S."/>
            <person name="Riccio M."/>
            <person name="Baldini G."/>
            <person name="Cappellini A."/>
            <person name="Billi A.M."/>
            <person name="Berezney R."/>
            <person name="Ruggeri A."/>
            <person name="Cocco L."/>
            <person name="Martelli A.M."/>
        </authorList>
    </citation>
    <scope>SUBCELLULAR LOCATION</scope>
    <scope>INTERACTION WITH PLCB1</scope>
</reference>
<reference key="8">
    <citation type="journal article" date="2004" name="Biochim. Biophys. Acta">
        <title>Structure-activity relationship of diacylglycerol kinase theta.</title>
        <authorList>
            <person name="Los A.P."/>
            <person name="van Baal J."/>
            <person name="de Widt J."/>
            <person name="Divecha N."/>
            <person name="van Blitterswijk W.J."/>
        </authorList>
    </citation>
    <scope>CATALYTIC ACTIVITY</scope>
    <scope>INTERACTION WITH RHOA</scope>
    <scope>MUTAGENESIS OF GLY-237; SER-241; LEU-242; PRO-245; PRO-246 AND GLY-648</scope>
</reference>
<reference key="9">
    <citation type="journal article" date="2005" name="J. Biol. Chem.">
        <title>Translocation of diacylglycerol kinase theta from cytosol to plasma membrane in response to activation of G protein-coupled receptors and protein kinase C.</title>
        <authorList>
            <person name="van Baal J."/>
            <person name="de Widt J."/>
            <person name="Divecha N."/>
            <person name="van Blitterswijk W.J."/>
        </authorList>
    </citation>
    <scope>INTERACTION WITH PRKCE AND PRKCH</scope>
    <scope>SUBCELLULAR LOCATION</scope>
    <scope>PHOSPHORYLATION</scope>
    <scope>MUTAGENESIS OF CYS-100; CYS-160; CYS-226 AND GLY-237</scope>
</reference>
<reference key="10">
    <citation type="journal article" date="2007" name="Mol. Cell. Biol.">
        <title>Cyclic AMP-stimulated interaction between steroidogenic factor 1 and diacylglycerol kinase theta facilitates induction of CYP17.</title>
        <authorList>
            <person name="Li D."/>
            <person name="Urs A.N."/>
            <person name="Allegood J."/>
            <person name="Leon A."/>
            <person name="Merrill A.H. Jr."/>
            <person name="Sewer M.B."/>
        </authorList>
    </citation>
    <scope>FUNCTION</scope>
    <scope>INTERACTION WITH NR5A1</scope>
    <scope>MOTIF</scope>
    <scope>DOMAIN</scope>
</reference>
<reference key="11">
    <citation type="journal article" date="2012" name="Biochem. Biophys. Res. Commun.">
        <title>Biosynthesis of alkyl lysophosphatidic acid by diacylglycerol kinases.</title>
        <authorList>
            <person name="Gellett A.M."/>
            <person name="Kharel Y."/>
            <person name="Sunkara M."/>
            <person name="Morris A.J."/>
            <person name="Lynch K.R."/>
        </authorList>
    </citation>
    <scope>FUNCTION</scope>
    <scope>CATALYTIC ACTIVITY</scope>
</reference>
<reference key="12">
    <citation type="journal article" date="2013" name="Pharmacology">
        <title>Evaluations of the selectivities of the diacylglycerol kinase inhibitors R59022 and R59949 among diacylglycerol kinase isozymes using a new non-radioactive assay method.</title>
        <authorList>
            <person name="Sato M."/>
            <person name="Liu K."/>
            <person name="Sasaki S."/>
            <person name="Kunii N."/>
            <person name="Sakai H."/>
            <person name="Mizuno H."/>
            <person name="Saga H."/>
            <person name="Sakane F."/>
        </authorList>
    </citation>
    <scope>CATALYTIC ACTIVITY</scope>
</reference>
<reference key="13">
    <citation type="journal article" date="2016" name="Cell Rep.">
        <title>DGKtheta Catalytic Activity Is Required for Efficient Recycling of Presynaptic Vesicles at Excitatory Synapses.</title>
        <authorList>
            <person name="Goldschmidt H.L."/>
            <person name="Tu-Sekine B."/>
            <person name="Volk L."/>
            <person name="Anggono V."/>
            <person name="Huganir R.L."/>
            <person name="Raben D.M."/>
        </authorList>
    </citation>
    <scope>FUNCTION</scope>
    <scope>MUTAGENESIS OF GLY-648</scope>
</reference>
<sequence length="942" mass="101155">MAAAAEPGARAWLGGGSPRPGSPACSPVLGSGGRARPGPGPGPGPERAGVRAPGPAAAPGHSFRKVTLTKPTFCHLCSDFIWGLAGFLCDVCNFMSHEKCLKHVRIPCTSVAPSLVRVPVAHCFGPRGLHKRKFCAVCRKVLEAPALHCEVCELHLHPDCVPFACSDCRQCHQDGHQDHDTHHHHWREGNLPSGARCEVCRKTCGSSDVLAGVRCEWCGVQAHSLCSAALAPECGFGRLRSLVLPPACVRLLPGGFSKTQSFRIVEAAEPGEGGDGADGSAAVGPGRETQATPESGKQTLKIFDGDDAVRRSQFRLVTVSRLAGAEEVLEAALRAHHIPEDPGHLELCRLPPSSQACDAWAGGKAGSAVISEEGRSPGSGEATPEAWVIRALPRAQEVLKIYPGWLKVGVAYVSVRVTPKSTARSVVLEVLPLLGRQAESPESFQLVEVAMGCRHVQRTMLMDEQPLLDRLQDIRQMSVRQVSQTRFYVAESRDVAPHVSLFVGGLPPGLSPEEYSSLLHEAGATKATVVSVSHIYSSQGAVVLDVACFAEAERLYMLLKDMAVRGRLLTALVLPDLLHAKLPPDSCPLLVFVNPKSGGLKGRDLLCSFRKLLNPHQVFDLTNGGPLPGLHLFSQVPCFRVLVCGGDGTVGWVLGALEETRYRLACPEPSVAILPLGTGNDLGRVLRWGAGYSGEDPFSVLLSVDEADAVLMDRWTILLDAHEAGSAENDTADAEPPKIVQMSNYCGIGIDAELSLDFHQAREEEPGKFTSRLHNKGVYVRVGLQKISHSRSLHKQIRLQVERQEVELPSIEGLIFINIPSWGSGADLWGSDSDTRFEKPRMDDGLLEVVGVTGVVHMGQVQGGLRSGIRIAQGSYFRVTLLKATPVQVDGEPWVQAPGHMIISAAGPKVHMLRKAKQKPRRAGTTRDARADAAPAPESDPR</sequence>
<accession>P52824</accession>
<accession>Q6P3W4</accession>